<evidence type="ECO:0000250" key="1">
    <source>
        <dbReference type="UniProtKB" id="Q8BLN6"/>
    </source>
</evidence>
<evidence type="ECO:0000250" key="2">
    <source>
        <dbReference type="UniProtKB" id="Q9P2D8"/>
    </source>
</evidence>
<evidence type="ECO:0000255" key="3"/>
<evidence type="ECO:0000256" key="4">
    <source>
        <dbReference type="SAM" id="MobiDB-lite"/>
    </source>
</evidence>
<evidence type="ECO:0000269" key="5">
    <source>
    </source>
</evidence>
<evidence type="ECO:0000269" key="6">
    <source>
    </source>
</evidence>
<evidence type="ECO:0000305" key="7"/>
<evidence type="ECO:0007744" key="8">
    <source>
    </source>
</evidence>
<organism>
    <name type="scientific">Mus musculus</name>
    <name type="common">Mouse</name>
    <dbReference type="NCBI Taxonomy" id="10090"/>
    <lineage>
        <taxon>Eukaryota</taxon>
        <taxon>Metazoa</taxon>
        <taxon>Chordata</taxon>
        <taxon>Craniata</taxon>
        <taxon>Vertebrata</taxon>
        <taxon>Euteleostomi</taxon>
        <taxon>Mammalia</taxon>
        <taxon>Eutheria</taxon>
        <taxon>Euarchontoglires</taxon>
        <taxon>Glires</taxon>
        <taxon>Rodentia</taxon>
        <taxon>Myomorpha</taxon>
        <taxon>Muroidea</taxon>
        <taxon>Muridae</taxon>
        <taxon>Murinae</taxon>
        <taxon>Mus</taxon>
        <taxon>Mus</taxon>
    </lineage>
</organism>
<name>UNC79_MOUSE</name>
<proteinExistence type="evidence at protein level"/>
<sequence>MSTKAEQFASKIRYLQEYHNRVLHNIYPVPSGTDIANTLKYFSQTLLSILSRTGKKENQDASNLTVPMTMCLFPVPFPLTPSLRPQVSSINPTVTRSLLYSVLRDAPSERGPQSRDAQLSDYPSLDYQGLYVTLVTLLDLVPLLQHGQHDLGQSIFYTTTCLLPFLNDDVLSTLPYTMISTLATFPPFLHKDIIEYLSTSFLPMAILGSSGREGVPAHVNLSASSMLMIAMQYTSNPVYHCQLLECLMKYKQEVWKDLLYVIAYGPSQVKPPAVQMLFHYWPNLKPPGAISEYRGLQYTAWNPIHCQHIECHNAINKPAVKMCIDPSLSVALGDKPPPLYLCEECSERISGDHSEWLIDVLLPQAEISAICQKKNCSSHVRRAVVTCFSAGCCGRHGNRPVRYCKRCHSNHHSNEVGATAETHLYQTSPPPINTRECGAEELVCAVEAVISLLKEAEFHAEQREHELNRRRQLGLSSSHHSLDNTDFDNKDDDKHDQRLLSQFGIWFLVSLCTPSENTPTESLARLVAMVFQWFHSTAYMMDDEVGSLVEKLKPQFVTKWLKTVCDVRFDVMVMCLLPKPMEFARVGGYWDKSCSTVTQLKEGLNRILCLIPYNVISQSVWECIMPEWLEAIRTEVPDNQLKEFREVLSKMFDIELCPLPFSMEEMFGFISCRFTGYPSTVQEQALLWLHVLSELDITVPLQLLISMFSDGVNSVKELANQRKSRANELAGNLASRRVSVASDPGRRGQHNTLSPFHSPFQSPFRSPMRSPFRSPFKNFGHPGGRTIDFDCEDDDMNLNCFILMFDLLLKQMELQDDGITMGLEHSLSKDIISIINNVFQAPWGGSHSCQKDKKATECNLCQSSILCYQLACELLERLAPKEESRLVEPTDSLEDSLLSSRPEFILGPEGEEEENPAAKHGENPGNRTVPSEHAAIKNDTERKFCYQQLPVTLRLIYTIFQEMAKFEEPDILFNMLNCLKILCLHGECLYTARKDHPQFLAYIQDHMLIASLWRVVKSEFSQLSSLAVPLLLHALSLPHGADIFWTIINGNFNSKDWKMRFEAVEKVAVICRFLDIHSVTKNHLLKYSLAHAFCCFLTAVEDVNPAVATRAGLLLDTIKRPALQGLCLCLDFQFDTVVKDRPTILSKLLLLHFLKQDIPALSWEFFVNRFETLSLEAQLHLDCNKEFPFPTTITAVRTNVANLSDAALWKIKRARFARNRQKSVRSLRDSVKGPAESKRALSLPETLTSKIRQQSPENDNTIKDLLPEDAGIDHQTVHQLITVLMKFMARDESSAESDISSAKAFNTVKRHLYVLLGYDQQEGCFMIAPQKMRLSTCFNAFIAGIAQVMDYNINLGKHLLPLVVQVLKYCSCPQLRHYFQQPPRCSLWSLKPHIRQMWLKALLVILYKYPYRDCDVSKTLLHLIHITVNTLNAQYHSCKPHATAGPLYTDNSNISRYSEKEKGEIELAEYRETGALQDSVLHCVREESIQKKKLRSLKQKSLDIGNADSLLFTLDEHRRKSCIDRCDIDKPPAQAAYISQRQNDHHGRSRQNSATRPDNTEIPKNPGTEGFQEIRRPVIPEVRLNCMETFEVRVDSPGKPAPREDLDLIDLSSDSTSGPEKHSILSTSDSDSLVFEPLPPLRIVESDEEEEMMNQGNGGALGNNAASSPSIPSQPSVLSLSTTPLVQVSVEDCSKDFSSKDSGNHQSASNEDSTIAALDDLTDSEELSKSEELREFASGSPLTLKQKRDLLQKSSAVPEMSVDYNPEPSPAEEKPGQTPTSGVKTVLLKVPEDGENLIESEKPNTSAESDTEQNPERKVEEDGAEESEFKIQIVPRQRKQRKIAVSAIQREYLDISFNILDKLGEQKDPDPSAKGLSTLEMPRESSSAPTLEAGAPETSSHSSISKQIQPGKRQCNVPMCLNPDLEGQPLRTRGATKSSLLSAPSIASMFVPAPEEFTEEQPTVMADKCHDCGAILEEYDEETLGLAIVVLSTFIHLSPDLAAPLLLDIMQSVGRLASSTTFSNQAESMMVPGNAAGVAKQFLRCIFHQLAPNGIFPQLFQSAIKDGTFLRTLATSLMDFNELSSIAALSQLLEGLNNKKNLPAGGAMIRCLENIATFMEALPMDSPSSLWTTISNQFQTFFAKLPCVLPLKCSLDSSLRIMICLLKIPSTNATRSLLEPFSKLLSFVIQNAVFTLAYLVELCGLCYRAFTKERDKFYLSRSVVLELLQALKLKSPLPDTNLLLLVQFICADAGTKLAESTILSKQMIASVPGCGTAAMECIRQYVSEVLEFMADMHTLTKLKSHMKTCSQPLHEDTFGGHLKVGLAQIAAMEISRGNHRDNKAVIRYLPWLYHPPSAMQQGPKEFIECVSHIRLLSWLLLGSLTHNAVCPNASSPCLPIPLDAGSHIADHLIVILIGFPEQSKTCVLHMCSLFHAFIFAQLWTVYCEQSAVATNVQNQNEFSFTAILTALEFWSRVTPSILQLMAHNKVMVEMVCLHVISLMEALQECNSTIFVKLIPMWLPMIQSNTKHLSAGLQLRLQAIQNNVNHHSLRTLPGSGQSSAGLAALRKWLQCTQFKMAQVEIQSSEAASQFYPL</sequence>
<keyword id="KW-1003">Cell membrane</keyword>
<keyword id="KW-0472">Membrane</keyword>
<keyword id="KW-0597">Phosphoprotein</keyword>
<keyword id="KW-1185">Reference proteome</keyword>
<keyword id="KW-0812">Transmembrane</keyword>
<keyword id="KW-1133">Transmembrane helix</keyword>
<feature type="chain" id="PRO_0000315619" description="Protein unc-79 homolog">
    <location>
        <begin position="1"/>
        <end position="2596"/>
    </location>
</feature>
<feature type="transmembrane region" description="Helical" evidence="3">
    <location>
        <begin position="2184"/>
        <end position="2204"/>
    </location>
</feature>
<feature type="transmembrane region" description="Helical" evidence="3">
    <location>
        <begin position="2426"/>
        <end position="2446"/>
    </location>
</feature>
<feature type="region of interest" description="Disordered" evidence="4">
    <location>
        <begin position="907"/>
        <end position="931"/>
    </location>
</feature>
<feature type="region of interest" description="Disordered" evidence="4">
    <location>
        <begin position="1539"/>
        <end position="1573"/>
    </location>
</feature>
<feature type="region of interest" description="Disordered" evidence="4">
    <location>
        <begin position="1594"/>
        <end position="1632"/>
    </location>
</feature>
<feature type="region of interest" description="Disordered" evidence="4">
    <location>
        <begin position="1648"/>
        <end position="1679"/>
    </location>
</feature>
<feature type="region of interest" description="Disordered" evidence="4">
    <location>
        <begin position="1695"/>
        <end position="1832"/>
    </location>
</feature>
<feature type="region of interest" description="Disordered" evidence="4">
    <location>
        <begin position="1863"/>
        <end position="1909"/>
    </location>
</feature>
<feature type="compositionally biased region" description="Basic and acidic residues" evidence="4">
    <location>
        <begin position="1594"/>
        <end position="1606"/>
    </location>
</feature>
<feature type="compositionally biased region" description="Low complexity" evidence="4">
    <location>
        <begin position="1662"/>
        <end position="1679"/>
    </location>
</feature>
<feature type="compositionally biased region" description="Polar residues" evidence="4">
    <location>
        <begin position="1704"/>
        <end position="1713"/>
    </location>
</feature>
<feature type="compositionally biased region" description="Basic and acidic residues" evidence="4">
    <location>
        <begin position="1726"/>
        <end position="1735"/>
    </location>
</feature>
<feature type="compositionally biased region" description="Polar residues" evidence="4">
    <location>
        <begin position="1897"/>
        <end position="1908"/>
    </location>
</feature>
<feature type="modified residue" description="Phosphoserine" evidence="8">
    <location>
        <position position="754"/>
    </location>
</feature>
<feature type="modified residue" description="Phosphoserine" evidence="8">
    <location>
        <position position="758"/>
    </location>
</feature>
<comment type="function">
    <text evidence="1">Auxiliary subunit of the NALCN sodium channel complex. The NALCN sodium channel complex is a voltage-gated ion channel responsible for the resting Na(+) permeability that controls neuronal excitability. Activated by neuropeptides substance P, neurotensin, and extracellular calcium that regulates neuronal excitability by controlling the sizes of NALCN-dependent sodium-leak current.</text>
</comment>
<comment type="subunit">
    <text evidence="1 5 6">NALCN complex consists of NALCN and auxiliary subunits, UNC79, UNC80 and NACL1. These auxiliary subunits are essential for the NALCN channel function (By similarity). UNC80 bridges NALCN to UNC79 (PubMed:21040849). Interacts with NALCN (PubMed:21040849). Interacts with UNC80 (PubMed:21040849, PubMed:32620897).</text>
</comment>
<comment type="subcellular location">
    <subcellularLocation>
        <location evidence="2">Cell membrane</location>
        <topology evidence="3">Multi-pass membrane protein</topology>
    </subcellularLocation>
</comment>
<comment type="similarity">
    <text evidence="7">Belongs to the unc-79 family.</text>
</comment>
<comment type="sequence caution" evidence="7">
    <conflict type="erroneous initiation">
        <sequence resource="EMBL-CDS" id="BAC28287"/>
    </conflict>
    <text>Truncated N-terminus.</text>
</comment>
<dbReference type="EMBL" id="AB257853">
    <property type="protein sequence ID" value="BAF03196.1"/>
    <property type="molecule type" value="mRNA"/>
</dbReference>
<dbReference type="EMBL" id="AB257858">
    <property type="protein sequence ID" value="BAF03201.1"/>
    <property type="molecule type" value="Genomic_DNA"/>
</dbReference>
<dbReference type="EMBL" id="AB093296">
    <property type="protein sequence ID" value="BAD02453.1"/>
    <property type="molecule type" value="mRNA"/>
</dbReference>
<dbReference type="EMBL" id="AK033439">
    <property type="protein sequence ID" value="BAC28287.1"/>
    <property type="status" value="ALT_INIT"/>
    <property type="molecule type" value="mRNA"/>
</dbReference>
<dbReference type="CCDS" id="CCDS49149.2"/>
<dbReference type="RefSeq" id="NP_001074486.2">
    <property type="nucleotide sequence ID" value="NM_001081017.2"/>
</dbReference>
<dbReference type="SMR" id="Q0KK59"/>
<dbReference type="BioGRID" id="229968">
    <property type="interactions" value="5"/>
</dbReference>
<dbReference type="FunCoup" id="Q0KK59">
    <property type="interactions" value="964"/>
</dbReference>
<dbReference type="IntAct" id="Q0KK59">
    <property type="interactions" value="1"/>
</dbReference>
<dbReference type="STRING" id="10090.ENSMUSP00000098659"/>
<dbReference type="GlyGen" id="Q0KK59">
    <property type="glycosylation" value="3 sites, 2 N-linked glycans (2 sites)"/>
</dbReference>
<dbReference type="iPTMnet" id="Q0KK59"/>
<dbReference type="PhosphoSitePlus" id="Q0KK59"/>
<dbReference type="SwissPalm" id="Q0KK59"/>
<dbReference type="PaxDb" id="10090-ENSMUSP00000136332"/>
<dbReference type="PeptideAtlas" id="Q0KK59"/>
<dbReference type="ProteomicsDB" id="300094"/>
<dbReference type="Antibodypedia" id="77841">
    <property type="antibodies" value="28 antibodies from 7 providers"/>
</dbReference>
<dbReference type="Ensembl" id="ENSMUST00000101099.12">
    <property type="protein sequence ID" value="ENSMUSP00000098659.6"/>
    <property type="gene ID" value="ENSMUSG00000021198.17"/>
</dbReference>
<dbReference type="GeneID" id="217843"/>
<dbReference type="KEGG" id="mmu:217843"/>
<dbReference type="UCSC" id="uc007ouw.2">
    <property type="organism name" value="mouse"/>
</dbReference>
<dbReference type="AGR" id="MGI:2684729"/>
<dbReference type="CTD" id="57578"/>
<dbReference type="MGI" id="MGI:2684729">
    <property type="gene designation" value="Unc79"/>
</dbReference>
<dbReference type="VEuPathDB" id="HostDB:ENSMUSG00000021198"/>
<dbReference type="eggNOG" id="KOG3685">
    <property type="taxonomic scope" value="Eukaryota"/>
</dbReference>
<dbReference type="eggNOG" id="KOG4820">
    <property type="taxonomic scope" value="Eukaryota"/>
</dbReference>
<dbReference type="GeneTree" id="ENSGT00390000011802"/>
<dbReference type="HOGENOM" id="CLU_000485_0_0_1"/>
<dbReference type="InParanoid" id="Q0KK59"/>
<dbReference type="OMA" id="GKERRWM"/>
<dbReference type="PhylomeDB" id="Q0KK59"/>
<dbReference type="Reactome" id="R-MMU-2672351">
    <property type="pathway name" value="Stimuli-sensing channels"/>
</dbReference>
<dbReference type="BioGRID-ORCS" id="217843">
    <property type="hits" value="3 hits in 77 CRISPR screens"/>
</dbReference>
<dbReference type="ChiTaRS" id="Unc79">
    <property type="organism name" value="mouse"/>
</dbReference>
<dbReference type="PRO" id="PR:Q0KK59"/>
<dbReference type="Proteomes" id="UP000000589">
    <property type="component" value="Chromosome 12"/>
</dbReference>
<dbReference type="RNAct" id="Q0KK59">
    <property type="molecule type" value="protein"/>
</dbReference>
<dbReference type="Bgee" id="ENSMUSG00000021198">
    <property type="expression patterns" value="Expressed in cortical plate and 43 other cell types or tissues"/>
</dbReference>
<dbReference type="ExpressionAtlas" id="Q0KK59">
    <property type="expression patterns" value="baseline and differential"/>
</dbReference>
<dbReference type="GO" id="GO:0005886">
    <property type="term" value="C:plasma membrane"/>
    <property type="evidence" value="ECO:0000250"/>
    <property type="project" value="UniProtKB"/>
</dbReference>
<dbReference type="GO" id="GO:0030534">
    <property type="term" value="P:adult behavior"/>
    <property type="evidence" value="ECO:0000315"/>
    <property type="project" value="MGI"/>
</dbReference>
<dbReference type="GO" id="GO:0048149">
    <property type="term" value="P:behavioral response to ethanol"/>
    <property type="evidence" value="ECO:0000315"/>
    <property type="project" value="MGI"/>
</dbReference>
<dbReference type="GO" id="GO:0035264">
    <property type="term" value="P:multicellular organism growth"/>
    <property type="evidence" value="ECO:0000315"/>
    <property type="project" value="MGI"/>
</dbReference>
<dbReference type="GO" id="GO:0001967">
    <property type="term" value="P:suckling behavior"/>
    <property type="evidence" value="ECO:0000315"/>
    <property type="project" value="MGI"/>
</dbReference>
<dbReference type="InterPro" id="IPR016024">
    <property type="entry name" value="ARM-type_fold"/>
</dbReference>
<dbReference type="InterPro" id="IPR024855">
    <property type="entry name" value="UNC79"/>
</dbReference>
<dbReference type="PANTHER" id="PTHR21696">
    <property type="entry name" value="PROTEIN UNC-79 HOMOLOG"/>
    <property type="match status" value="1"/>
</dbReference>
<dbReference type="PANTHER" id="PTHR21696:SF2">
    <property type="entry name" value="PROTEIN UNC-79 HOMOLOG"/>
    <property type="match status" value="1"/>
</dbReference>
<dbReference type="Pfam" id="PF14776">
    <property type="entry name" value="UNC-79"/>
    <property type="match status" value="1"/>
</dbReference>
<dbReference type="SUPFAM" id="SSF48371">
    <property type="entry name" value="ARM repeat"/>
    <property type="match status" value="1"/>
</dbReference>
<gene>
    <name type="primary">Unc79</name>
    <name type="synonym">Kiaa1409</name>
</gene>
<accession>Q0KK59</accession>
<accession>Q0KK54</accession>
<accession>Q6L9U9</accession>
<accession>Q8CCC5</accession>
<reference key="1">
    <citation type="journal article" date="2006" name="FASEB J.">
        <title>A gene-targeting approach for functional characterization of KIAA genes encoding extremely large proteins.</title>
        <authorList>
            <person name="Nakayama M."/>
            <person name="Iida M."/>
            <person name="Koseki H."/>
            <person name="Ohara O."/>
        </authorList>
    </citation>
    <scope>NUCLEOTIDE SEQUENCE [GENOMIC DNA / MRNA]</scope>
    <source>
        <strain>BALB/cCrSlc</strain>
        <tissue>Brain</tissue>
    </source>
</reference>
<reference key="2">
    <citation type="journal article" date="2003" name="Biochem. Biophys. Res. Commun.">
        <title>A system using convertible vectors for screening soluble recombinant proteins produced in Escherichia coli from randomly fragmented cDNAs.</title>
        <authorList>
            <person name="Nakayama M."/>
            <person name="Ohara O."/>
        </authorList>
    </citation>
    <scope>NUCLEOTIDE SEQUENCE [MRNA] OF 740-2596</scope>
    <source>
        <tissue>Brain</tissue>
    </source>
</reference>
<reference key="3">
    <citation type="journal article" date="2005" name="Science">
        <title>The transcriptional landscape of the mammalian genome.</title>
        <authorList>
            <person name="Carninci P."/>
            <person name="Kasukawa T."/>
            <person name="Katayama S."/>
            <person name="Gough J."/>
            <person name="Frith M.C."/>
            <person name="Maeda N."/>
            <person name="Oyama R."/>
            <person name="Ravasi T."/>
            <person name="Lenhard B."/>
            <person name="Wells C."/>
            <person name="Kodzius R."/>
            <person name="Shimokawa K."/>
            <person name="Bajic V.B."/>
            <person name="Brenner S.E."/>
            <person name="Batalov S."/>
            <person name="Forrest A.R."/>
            <person name="Zavolan M."/>
            <person name="Davis M.J."/>
            <person name="Wilming L.G."/>
            <person name="Aidinis V."/>
            <person name="Allen J.E."/>
            <person name="Ambesi-Impiombato A."/>
            <person name="Apweiler R."/>
            <person name="Aturaliya R.N."/>
            <person name="Bailey T.L."/>
            <person name="Bansal M."/>
            <person name="Baxter L."/>
            <person name="Beisel K.W."/>
            <person name="Bersano T."/>
            <person name="Bono H."/>
            <person name="Chalk A.M."/>
            <person name="Chiu K.P."/>
            <person name="Choudhary V."/>
            <person name="Christoffels A."/>
            <person name="Clutterbuck D.R."/>
            <person name="Crowe M.L."/>
            <person name="Dalla E."/>
            <person name="Dalrymple B.P."/>
            <person name="de Bono B."/>
            <person name="Della Gatta G."/>
            <person name="di Bernardo D."/>
            <person name="Down T."/>
            <person name="Engstrom P."/>
            <person name="Fagiolini M."/>
            <person name="Faulkner G."/>
            <person name="Fletcher C.F."/>
            <person name="Fukushima T."/>
            <person name="Furuno M."/>
            <person name="Futaki S."/>
            <person name="Gariboldi M."/>
            <person name="Georgii-Hemming P."/>
            <person name="Gingeras T.R."/>
            <person name="Gojobori T."/>
            <person name="Green R.E."/>
            <person name="Gustincich S."/>
            <person name="Harbers M."/>
            <person name="Hayashi Y."/>
            <person name="Hensch T.K."/>
            <person name="Hirokawa N."/>
            <person name="Hill D."/>
            <person name="Huminiecki L."/>
            <person name="Iacono M."/>
            <person name="Ikeo K."/>
            <person name="Iwama A."/>
            <person name="Ishikawa T."/>
            <person name="Jakt M."/>
            <person name="Kanapin A."/>
            <person name="Katoh M."/>
            <person name="Kawasawa Y."/>
            <person name="Kelso J."/>
            <person name="Kitamura H."/>
            <person name="Kitano H."/>
            <person name="Kollias G."/>
            <person name="Krishnan S.P."/>
            <person name="Kruger A."/>
            <person name="Kummerfeld S.K."/>
            <person name="Kurochkin I.V."/>
            <person name="Lareau L.F."/>
            <person name="Lazarevic D."/>
            <person name="Lipovich L."/>
            <person name="Liu J."/>
            <person name="Liuni S."/>
            <person name="McWilliam S."/>
            <person name="Madan Babu M."/>
            <person name="Madera M."/>
            <person name="Marchionni L."/>
            <person name="Matsuda H."/>
            <person name="Matsuzawa S."/>
            <person name="Miki H."/>
            <person name="Mignone F."/>
            <person name="Miyake S."/>
            <person name="Morris K."/>
            <person name="Mottagui-Tabar S."/>
            <person name="Mulder N."/>
            <person name="Nakano N."/>
            <person name="Nakauchi H."/>
            <person name="Ng P."/>
            <person name="Nilsson R."/>
            <person name="Nishiguchi S."/>
            <person name="Nishikawa S."/>
            <person name="Nori F."/>
            <person name="Ohara O."/>
            <person name="Okazaki Y."/>
            <person name="Orlando V."/>
            <person name="Pang K.C."/>
            <person name="Pavan W.J."/>
            <person name="Pavesi G."/>
            <person name="Pesole G."/>
            <person name="Petrovsky N."/>
            <person name="Piazza S."/>
            <person name="Reed J."/>
            <person name="Reid J.F."/>
            <person name="Ring B.Z."/>
            <person name="Ringwald M."/>
            <person name="Rost B."/>
            <person name="Ruan Y."/>
            <person name="Salzberg S.L."/>
            <person name="Sandelin A."/>
            <person name="Schneider C."/>
            <person name="Schoenbach C."/>
            <person name="Sekiguchi K."/>
            <person name="Semple C.A."/>
            <person name="Seno S."/>
            <person name="Sessa L."/>
            <person name="Sheng Y."/>
            <person name="Shibata Y."/>
            <person name="Shimada H."/>
            <person name="Shimada K."/>
            <person name="Silva D."/>
            <person name="Sinclair B."/>
            <person name="Sperling S."/>
            <person name="Stupka E."/>
            <person name="Sugiura K."/>
            <person name="Sultana R."/>
            <person name="Takenaka Y."/>
            <person name="Taki K."/>
            <person name="Tammoja K."/>
            <person name="Tan S.L."/>
            <person name="Tang S."/>
            <person name="Taylor M.S."/>
            <person name="Tegner J."/>
            <person name="Teichmann S.A."/>
            <person name="Ueda H.R."/>
            <person name="van Nimwegen E."/>
            <person name="Verardo R."/>
            <person name="Wei C.L."/>
            <person name="Yagi K."/>
            <person name="Yamanishi H."/>
            <person name="Zabarovsky E."/>
            <person name="Zhu S."/>
            <person name="Zimmer A."/>
            <person name="Hide W."/>
            <person name="Bult C."/>
            <person name="Grimmond S.M."/>
            <person name="Teasdale R.D."/>
            <person name="Liu E.T."/>
            <person name="Brusic V."/>
            <person name="Quackenbush J."/>
            <person name="Wahlestedt C."/>
            <person name="Mattick J.S."/>
            <person name="Hume D.A."/>
            <person name="Kai C."/>
            <person name="Sasaki D."/>
            <person name="Tomaru Y."/>
            <person name="Fukuda S."/>
            <person name="Kanamori-Katayama M."/>
            <person name="Suzuki M."/>
            <person name="Aoki J."/>
            <person name="Arakawa T."/>
            <person name="Iida J."/>
            <person name="Imamura K."/>
            <person name="Itoh M."/>
            <person name="Kato T."/>
            <person name="Kawaji H."/>
            <person name="Kawagashira N."/>
            <person name="Kawashima T."/>
            <person name="Kojima M."/>
            <person name="Kondo S."/>
            <person name="Konno H."/>
            <person name="Nakano K."/>
            <person name="Ninomiya N."/>
            <person name="Nishio T."/>
            <person name="Okada M."/>
            <person name="Plessy C."/>
            <person name="Shibata K."/>
            <person name="Shiraki T."/>
            <person name="Suzuki S."/>
            <person name="Tagami M."/>
            <person name="Waki K."/>
            <person name="Watahiki A."/>
            <person name="Okamura-Oho Y."/>
            <person name="Suzuki H."/>
            <person name="Kawai J."/>
            <person name="Hayashizaki Y."/>
        </authorList>
    </citation>
    <scope>NUCLEOTIDE SEQUENCE [LARGE SCALE MRNA] OF 2123-2596</scope>
    <source>
        <strain>C57BL/6J</strain>
        <tissue>Colon</tissue>
    </source>
</reference>
<reference key="4">
    <citation type="journal article" date="2010" name="Cell">
        <title>A tissue-specific atlas of mouse protein phosphorylation and expression.</title>
        <authorList>
            <person name="Huttlin E.L."/>
            <person name="Jedrychowski M.P."/>
            <person name="Elias J.E."/>
            <person name="Goswami T."/>
            <person name="Rad R."/>
            <person name="Beausoleil S.A."/>
            <person name="Villen J."/>
            <person name="Haas W."/>
            <person name="Sowa M.E."/>
            <person name="Gygi S.P."/>
        </authorList>
    </citation>
    <scope>PHOSPHORYLATION [LARGE SCALE ANALYSIS] AT SER-754 AND SER-758</scope>
    <scope>IDENTIFICATION BY MASS SPECTROMETRY [LARGE SCALE ANALYSIS]</scope>
    <source>
        <tissue>Brain</tissue>
    </source>
</reference>
<reference key="5">
    <citation type="journal article" date="2010" name="Neuron">
        <title>Extracellular calcium controls background current and neuronal excitability via an UNC79-UNC80-NALCN cation channel complex.</title>
        <authorList>
            <person name="Lu B."/>
            <person name="Zhang Q."/>
            <person name="Wang H."/>
            <person name="Wang Y."/>
            <person name="Nakayama M."/>
            <person name="Ren D."/>
        </authorList>
    </citation>
    <scope>INTERACTION WITH UNC80 AND NACLN</scope>
    <scope>SUBUNIT</scope>
</reference>
<reference key="6">
    <citation type="journal article" date="2020" name="Nat. Commun.">
        <title>Intellectual disability-associated UNC80 mutations reveal inter-subunit interaction and dendritic function of the NALCN channel complex.</title>
        <authorList>
            <consortium name="C4RCD Research Group"/>
            <person name="Wie J."/>
            <person name="Bharthur A."/>
            <person name="Wolfgang M."/>
            <person name="Narayanan V."/>
            <person name="Ramsey K."/>
            <person name="Aranda K."/>
            <person name="Zhang Q."/>
            <person name="Zhou Y."/>
            <person name="Ren D."/>
        </authorList>
    </citation>
    <scope>SUBUNIT</scope>
    <scope>INTERACTION WITH UNC80</scope>
</reference>
<protein>
    <recommendedName>
        <fullName>Protein unc-79 homolog</fullName>
    </recommendedName>
</protein>